<gene>
    <name evidence="1" type="primary">lgt</name>
    <name type="ordered locus">XAC0841</name>
</gene>
<proteinExistence type="inferred from homology"/>
<comment type="function">
    <text evidence="1">Catalyzes the transfer of the diacylglyceryl group from phosphatidylglycerol to the sulfhydryl group of the N-terminal cysteine of a prolipoprotein, the first step in the formation of mature lipoproteins.</text>
</comment>
<comment type="catalytic activity">
    <reaction evidence="1">
        <text>L-cysteinyl-[prolipoprotein] + a 1,2-diacyl-sn-glycero-3-phospho-(1'-sn-glycerol) = an S-1,2-diacyl-sn-glyceryl-L-cysteinyl-[prolipoprotein] + sn-glycerol 1-phosphate + H(+)</text>
        <dbReference type="Rhea" id="RHEA:56712"/>
        <dbReference type="Rhea" id="RHEA-COMP:14679"/>
        <dbReference type="Rhea" id="RHEA-COMP:14680"/>
        <dbReference type="ChEBI" id="CHEBI:15378"/>
        <dbReference type="ChEBI" id="CHEBI:29950"/>
        <dbReference type="ChEBI" id="CHEBI:57685"/>
        <dbReference type="ChEBI" id="CHEBI:64716"/>
        <dbReference type="ChEBI" id="CHEBI:140658"/>
        <dbReference type="EC" id="2.5.1.145"/>
    </reaction>
</comment>
<comment type="pathway">
    <text evidence="1">Protein modification; lipoprotein biosynthesis (diacylglyceryl transfer).</text>
</comment>
<comment type="subcellular location">
    <subcellularLocation>
        <location evidence="1">Cell inner membrane</location>
        <topology evidence="1">Multi-pass membrane protein</topology>
    </subcellularLocation>
</comment>
<comment type="similarity">
    <text evidence="1">Belongs to the Lgt family.</text>
</comment>
<organism>
    <name type="scientific">Xanthomonas axonopodis pv. citri (strain 306)</name>
    <dbReference type="NCBI Taxonomy" id="190486"/>
    <lineage>
        <taxon>Bacteria</taxon>
        <taxon>Pseudomonadati</taxon>
        <taxon>Pseudomonadota</taxon>
        <taxon>Gammaproteobacteria</taxon>
        <taxon>Lysobacterales</taxon>
        <taxon>Lysobacteraceae</taxon>
        <taxon>Xanthomonas</taxon>
    </lineage>
</organism>
<name>LGT_XANAC</name>
<sequence length="296" mass="32742">MIYLHAIDPIAFSLGPVQVHWYGLMYLAAFFSAWALGRSRILRGRLPGVDMDGFSDLLFYGMLGVVLGGRIGYMLFYAFETFLANPLILFKVWEGGMSFHGGLLGVLIACWLWARKHRLHFFDVMDFVAPLVPLGLGFGRLGNFVGGELWGKFTQAGWGVIFPHAPELADRLPAQIQAQYAAGALNQFARHPSQLYEAALEGVVMFVVLWTFSMKPRARYAVSGLFALLYGVFRFIVEFVRVPDAPIGYLAFNWLTMGQILSLPLVAVGLVLLAMSRRAPVLQPVLPVPAGVEAAK</sequence>
<dbReference type="EC" id="2.5.1.145" evidence="1"/>
<dbReference type="EMBL" id="AE008923">
    <property type="protein sequence ID" value="AAM35729.1"/>
    <property type="molecule type" value="Genomic_DNA"/>
</dbReference>
<dbReference type="RefSeq" id="WP_011050571.1">
    <property type="nucleotide sequence ID" value="NC_003919.1"/>
</dbReference>
<dbReference type="SMR" id="Q8PP47"/>
<dbReference type="GeneID" id="66910032"/>
<dbReference type="KEGG" id="xac:XAC0841"/>
<dbReference type="eggNOG" id="COG0682">
    <property type="taxonomic scope" value="Bacteria"/>
</dbReference>
<dbReference type="HOGENOM" id="CLU_013386_1_0_6"/>
<dbReference type="UniPathway" id="UPA00664"/>
<dbReference type="Proteomes" id="UP000000576">
    <property type="component" value="Chromosome"/>
</dbReference>
<dbReference type="GO" id="GO:0005886">
    <property type="term" value="C:plasma membrane"/>
    <property type="evidence" value="ECO:0007669"/>
    <property type="project" value="UniProtKB-SubCell"/>
</dbReference>
<dbReference type="GO" id="GO:0008961">
    <property type="term" value="F:phosphatidylglycerol-prolipoprotein diacylglyceryl transferase activity"/>
    <property type="evidence" value="ECO:0007669"/>
    <property type="project" value="UniProtKB-UniRule"/>
</dbReference>
<dbReference type="GO" id="GO:0042158">
    <property type="term" value="P:lipoprotein biosynthetic process"/>
    <property type="evidence" value="ECO:0007669"/>
    <property type="project" value="UniProtKB-UniRule"/>
</dbReference>
<dbReference type="HAMAP" id="MF_01147">
    <property type="entry name" value="Lgt"/>
    <property type="match status" value="1"/>
</dbReference>
<dbReference type="InterPro" id="IPR001640">
    <property type="entry name" value="Lgt"/>
</dbReference>
<dbReference type="NCBIfam" id="TIGR00544">
    <property type="entry name" value="lgt"/>
    <property type="match status" value="1"/>
</dbReference>
<dbReference type="PANTHER" id="PTHR30589:SF0">
    <property type="entry name" value="PHOSPHATIDYLGLYCEROL--PROLIPOPROTEIN DIACYLGLYCERYL TRANSFERASE"/>
    <property type="match status" value="1"/>
</dbReference>
<dbReference type="PANTHER" id="PTHR30589">
    <property type="entry name" value="PROLIPOPROTEIN DIACYLGLYCERYL TRANSFERASE"/>
    <property type="match status" value="1"/>
</dbReference>
<dbReference type="Pfam" id="PF01790">
    <property type="entry name" value="LGT"/>
    <property type="match status" value="1"/>
</dbReference>
<dbReference type="PROSITE" id="PS01311">
    <property type="entry name" value="LGT"/>
    <property type="match status" value="1"/>
</dbReference>
<protein>
    <recommendedName>
        <fullName evidence="1">Phosphatidylglycerol--prolipoprotein diacylglyceryl transferase</fullName>
        <ecNumber evidence="1">2.5.1.145</ecNumber>
    </recommendedName>
</protein>
<evidence type="ECO:0000255" key="1">
    <source>
        <dbReference type="HAMAP-Rule" id="MF_01147"/>
    </source>
</evidence>
<feature type="chain" id="PRO_0000172717" description="Phosphatidylglycerol--prolipoprotein diacylglyceryl transferase">
    <location>
        <begin position="1"/>
        <end position="296"/>
    </location>
</feature>
<feature type="transmembrane region" description="Helical" evidence="1">
    <location>
        <begin position="10"/>
        <end position="30"/>
    </location>
</feature>
<feature type="transmembrane region" description="Helical" evidence="1">
    <location>
        <begin position="57"/>
        <end position="77"/>
    </location>
</feature>
<feature type="transmembrane region" description="Helical" evidence="1">
    <location>
        <begin position="92"/>
        <end position="112"/>
    </location>
</feature>
<feature type="transmembrane region" description="Helical" evidence="1">
    <location>
        <begin position="119"/>
        <end position="139"/>
    </location>
</feature>
<feature type="transmembrane region" description="Helical" evidence="1">
    <location>
        <begin position="194"/>
        <end position="214"/>
    </location>
</feature>
<feature type="transmembrane region" description="Helical" evidence="1">
    <location>
        <begin position="220"/>
        <end position="240"/>
    </location>
</feature>
<feature type="transmembrane region" description="Helical" evidence="1">
    <location>
        <begin position="254"/>
        <end position="274"/>
    </location>
</feature>
<feature type="binding site" evidence="1">
    <location>
        <position position="140"/>
    </location>
    <ligand>
        <name>a 1,2-diacyl-sn-glycero-3-phospho-(1'-sn-glycerol)</name>
        <dbReference type="ChEBI" id="CHEBI:64716"/>
    </ligand>
</feature>
<reference key="1">
    <citation type="journal article" date="2002" name="Nature">
        <title>Comparison of the genomes of two Xanthomonas pathogens with differing host specificities.</title>
        <authorList>
            <person name="da Silva A.C.R."/>
            <person name="Ferro J.A."/>
            <person name="Reinach F.C."/>
            <person name="Farah C.S."/>
            <person name="Furlan L.R."/>
            <person name="Quaggio R.B."/>
            <person name="Monteiro-Vitorello C.B."/>
            <person name="Van Sluys M.A."/>
            <person name="Almeida N.F. Jr."/>
            <person name="Alves L.M.C."/>
            <person name="do Amaral A.M."/>
            <person name="Bertolini M.C."/>
            <person name="Camargo L.E.A."/>
            <person name="Camarotte G."/>
            <person name="Cannavan F."/>
            <person name="Cardozo J."/>
            <person name="Chambergo F."/>
            <person name="Ciapina L.P."/>
            <person name="Cicarelli R.M.B."/>
            <person name="Coutinho L.L."/>
            <person name="Cursino-Santos J.R."/>
            <person name="El-Dorry H."/>
            <person name="Faria J.B."/>
            <person name="Ferreira A.J.S."/>
            <person name="Ferreira R.C.C."/>
            <person name="Ferro M.I.T."/>
            <person name="Formighieri E.F."/>
            <person name="Franco M.C."/>
            <person name="Greggio C.C."/>
            <person name="Gruber A."/>
            <person name="Katsuyama A.M."/>
            <person name="Kishi L.T."/>
            <person name="Leite R.P."/>
            <person name="Lemos E.G.M."/>
            <person name="Lemos M.V.F."/>
            <person name="Locali E.C."/>
            <person name="Machado M.A."/>
            <person name="Madeira A.M.B.N."/>
            <person name="Martinez-Rossi N.M."/>
            <person name="Martins E.C."/>
            <person name="Meidanis J."/>
            <person name="Menck C.F.M."/>
            <person name="Miyaki C.Y."/>
            <person name="Moon D.H."/>
            <person name="Moreira L.M."/>
            <person name="Novo M.T.M."/>
            <person name="Okura V.K."/>
            <person name="Oliveira M.C."/>
            <person name="Oliveira V.R."/>
            <person name="Pereira H.A."/>
            <person name="Rossi A."/>
            <person name="Sena J.A.D."/>
            <person name="Silva C."/>
            <person name="de Souza R.F."/>
            <person name="Spinola L.A.F."/>
            <person name="Takita M.A."/>
            <person name="Tamura R.E."/>
            <person name="Teixeira E.C."/>
            <person name="Tezza R.I.D."/>
            <person name="Trindade dos Santos M."/>
            <person name="Truffi D."/>
            <person name="Tsai S.M."/>
            <person name="White F.F."/>
            <person name="Setubal J.C."/>
            <person name="Kitajima J.P."/>
        </authorList>
    </citation>
    <scope>NUCLEOTIDE SEQUENCE [LARGE SCALE GENOMIC DNA]</scope>
    <source>
        <strain>306</strain>
    </source>
</reference>
<keyword id="KW-0997">Cell inner membrane</keyword>
<keyword id="KW-1003">Cell membrane</keyword>
<keyword id="KW-0472">Membrane</keyword>
<keyword id="KW-0808">Transferase</keyword>
<keyword id="KW-0812">Transmembrane</keyword>
<keyword id="KW-1133">Transmembrane helix</keyword>
<accession>Q8PP47</accession>